<reference key="1">
    <citation type="journal article" date="2006" name="Proc. Natl. Acad. Sci. U.S.A.">
        <title>Comparative genomics of the lactic acid bacteria.</title>
        <authorList>
            <person name="Makarova K.S."/>
            <person name="Slesarev A."/>
            <person name="Wolf Y.I."/>
            <person name="Sorokin A."/>
            <person name="Mirkin B."/>
            <person name="Koonin E.V."/>
            <person name="Pavlov A."/>
            <person name="Pavlova N."/>
            <person name="Karamychev V."/>
            <person name="Polouchine N."/>
            <person name="Shakhova V."/>
            <person name="Grigoriev I."/>
            <person name="Lou Y."/>
            <person name="Rohksar D."/>
            <person name="Lucas S."/>
            <person name="Huang K."/>
            <person name="Goodstein D.M."/>
            <person name="Hawkins T."/>
            <person name="Plengvidhya V."/>
            <person name="Welker D."/>
            <person name="Hughes J."/>
            <person name="Goh Y."/>
            <person name="Benson A."/>
            <person name="Baldwin K."/>
            <person name="Lee J.-H."/>
            <person name="Diaz-Muniz I."/>
            <person name="Dosti B."/>
            <person name="Smeianov V."/>
            <person name="Wechter W."/>
            <person name="Barabote R."/>
            <person name="Lorca G."/>
            <person name="Altermann E."/>
            <person name="Barrangou R."/>
            <person name="Ganesan B."/>
            <person name="Xie Y."/>
            <person name="Rawsthorne H."/>
            <person name="Tamir D."/>
            <person name="Parker C."/>
            <person name="Breidt F."/>
            <person name="Broadbent J.R."/>
            <person name="Hutkins R."/>
            <person name="O'Sullivan D."/>
            <person name="Steele J."/>
            <person name="Unlu G."/>
            <person name="Saier M.H. Jr."/>
            <person name="Klaenhammer T."/>
            <person name="Richardson P."/>
            <person name="Kozyavkin S."/>
            <person name="Weimer B.C."/>
            <person name="Mills D.A."/>
        </authorList>
    </citation>
    <scope>NUCLEOTIDE SEQUENCE [LARGE SCALE GENOMIC DNA]</scope>
    <source>
        <strain>ATCC 334 / BCRC 17002 / CCUG 31169 / CIP 107868 / KCTC 3260 / NRRL B-441</strain>
    </source>
</reference>
<dbReference type="EC" id="6.3.5.3" evidence="1"/>
<dbReference type="EC" id="3.5.1.2" evidence="1"/>
<dbReference type="EMBL" id="CP000423">
    <property type="protein sequence ID" value="ABJ70524.1"/>
    <property type="molecule type" value="Genomic_DNA"/>
</dbReference>
<dbReference type="RefSeq" id="WP_003594882.1">
    <property type="nucleotide sequence ID" value="NC_008526.1"/>
</dbReference>
<dbReference type="RefSeq" id="YP_806966.1">
    <property type="nucleotide sequence ID" value="NC_008526.1"/>
</dbReference>
<dbReference type="SMR" id="Q037U8"/>
<dbReference type="STRING" id="321967.LSEI_1752"/>
<dbReference type="PaxDb" id="321967-LSEI_1752"/>
<dbReference type="KEGG" id="lca:LSEI_1752"/>
<dbReference type="PATRIC" id="fig|321967.11.peg.1731"/>
<dbReference type="HOGENOM" id="CLU_001031_3_1_9"/>
<dbReference type="UniPathway" id="UPA00074">
    <property type="reaction ID" value="UER00128"/>
</dbReference>
<dbReference type="Proteomes" id="UP000001651">
    <property type="component" value="Chromosome"/>
</dbReference>
<dbReference type="GO" id="GO:0005737">
    <property type="term" value="C:cytoplasm"/>
    <property type="evidence" value="ECO:0007669"/>
    <property type="project" value="UniProtKB-SubCell"/>
</dbReference>
<dbReference type="GO" id="GO:0005524">
    <property type="term" value="F:ATP binding"/>
    <property type="evidence" value="ECO:0007669"/>
    <property type="project" value="UniProtKB-KW"/>
</dbReference>
<dbReference type="GO" id="GO:0004359">
    <property type="term" value="F:glutaminase activity"/>
    <property type="evidence" value="ECO:0007669"/>
    <property type="project" value="UniProtKB-EC"/>
</dbReference>
<dbReference type="GO" id="GO:0004642">
    <property type="term" value="F:phosphoribosylformylglycinamidine synthase activity"/>
    <property type="evidence" value="ECO:0007669"/>
    <property type="project" value="UniProtKB-UniRule"/>
</dbReference>
<dbReference type="GO" id="GO:0006189">
    <property type="term" value="P:'de novo' IMP biosynthetic process"/>
    <property type="evidence" value="ECO:0007669"/>
    <property type="project" value="UniProtKB-UniRule"/>
</dbReference>
<dbReference type="CDD" id="cd01740">
    <property type="entry name" value="GATase1_FGAR_AT"/>
    <property type="match status" value="1"/>
</dbReference>
<dbReference type="FunFam" id="3.40.50.880:FF:000019">
    <property type="entry name" value="Phosphoribosylformylglycinamidine synthase subunit PurQ"/>
    <property type="match status" value="1"/>
</dbReference>
<dbReference type="Gene3D" id="3.40.50.880">
    <property type="match status" value="1"/>
</dbReference>
<dbReference type="HAMAP" id="MF_00421">
    <property type="entry name" value="PurQ"/>
    <property type="match status" value="1"/>
</dbReference>
<dbReference type="InterPro" id="IPR029062">
    <property type="entry name" value="Class_I_gatase-like"/>
</dbReference>
<dbReference type="InterPro" id="IPR010075">
    <property type="entry name" value="PRibForGlyAmidine_synth_PurQ"/>
</dbReference>
<dbReference type="NCBIfam" id="TIGR01737">
    <property type="entry name" value="FGAM_synth_I"/>
    <property type="match status" value="1"/>
</dbReference>
<dbReference type="NCBIfam" id="NF002957">
    <property type="entry name" value="PRK03619.1"/>
    <property type="match status" value="1"/>
</dbReference>
<dbReference type="PANTHER" id="PTHR47552">
    <property type="entry name" value="PHOSPHORIBOSYLFORMYLGLYCINAMIDINE SYNTHASE SUBUNIT PURQ"/>
    <property type="match status" value="1"/>
</dbReference>
<dbReference type="PANTHER" id="PTHR47552:SF1">
    <property type="entry name" value="PHOSPHORIBOSYLFORMYLGLYCINAMIDINE SYNTHASE SUBUNIT PURQ"/>
    <property type="match status" value="1"/>
</dbReference>
<dbReference type="Pfam" id="PF13507">
    <property type="entry name" value="GATase_5"/>
    <property type="match status" value="1"/>
</dbReference>
<dbReference type="PIRSF" id="PIRSF001586">
    <property type="entry name" value="FGAM_synth_I"/>
    <property type="match status" value="1"/>
</dbReference>
<dbReference type="SMART" id="SM01211">
    <property type="entry name" value="GATase_5"/>
    <property type="match status" value="1"/>
</dbReference>
<dbReference type="SUPFAM" id="SSF52317">
    <property type="entry name" value="Class I glutamine amidotransferase-like"/>
    <property type="match status" value="1"/>
</dbReference>
<dbReference type="PROSITE" id="PS51273">
    <property type="entry name" value="GATASE_TYPE_1"/>
    <property type="match status" value="1"/>
</dbReference>
<name>PURQ_LACP3</name>
<protein>
    <recommendedName>
        <fullName evidence="1">Phosphoribosylformylglycinamidine synthase subunit PurQ</fullName>
        <shortName evidence="1">FGAM synthase</shortName>
        <ecNumber evidence="1">6.3.5.3</ecNumber>
    </recommendedName>
    <alternativeName>
        <fullName evidence="1">Formylglycinamide ribonucleotide amidotransferase subunit I</fullName>
        <shortName evidence="1">FGAR amidotransferase I</shortName>
        <shortName evidence="1">FGAR-AT I</shortName>
    </alternativeName>
    <alternativeName>
        <fullName evidence="1">Glutaminase PurQ</fullName>
        <ecNumber evidence="1">3.5.1.2</ecNumber>
    </alternativeName>
    <alternativeName>
        <fullName evidence="1">Phosphoribosylformylglycinamidine synthase subunit I</fullName>
    </alternativeName>
</protein>
<feature type="chain" id="PRO_1000124120" description="Phosphoribosylformylglycinamidine synthase subunit PurQ">
    <location>
        <begin position="1"/>
        <end position="228"/>
    </location>
</feature>
<feature type="domain" description="Glutamine amidotransferase type-1" evidence="1">
    <location>
        <begin position="2"/>
        <end position="225"/>
    </location>
</feature>
<feature type="active site" description="Nucleophile" evidence="1">
    <location>
        <position position="86"/>
    </location>
</feature>
<feature type="active site" evidence="1">
    <location>
        <position position="194"/>
    </location>
</feature>
<feature type="active site" evidence="1">
    <location>
        <position position="196"/>
    </location>
</feature>
<keyword id="KW-0067">ATP-binding</keyword>
<keyword id="KW-0963">Cytoplasm</keyword>
<keyword id="KW-0315">Glutamine amidotransferase</keyword>
<keyword id="KW-0378">Hydrolase</keyword>
<keyword id="KW-0436">Ligase</keyword>
<keyword id="KW-0547">Nucleotide-binding</keyword>
<keyword id="KW-0658">Purine biosynthesis</keyword>
<keyword id="KW-1185">Reference proteome</keyword>
<accession>Q037U8</accession>
<evidence type="ECO:0000255" key="1">
    <source>
        <dbReference type="HAMAP-Rule" id="MF_00421"/>
    </source>
</evidence>
<gene>
    <name evidence="1" type="primary">purQ</name>
    <name type="ordered locus">LSEI_1752</name>
</gene>
<organism>
    <name type="scientific">Lacticaseibacillus paracasei (strain ATCC 334 / BCRC 17002 / CCUG 31169 / CIP 107868 / KCTC 3260 / NRRL B-441)</name>
    <name type="common">Lactobacillus paracasei</name>
    <dbReference type="NCBI Taxonomy" id="321967"/>
    <lineage>
        <taxon>Bacteria</taxon>
        <taxon>Bacillati</taxon>
        <taxon>Bacillota</taxon>
        <taxon>Bacilli</taxon>
        <taxon>Lactobacillales</taxon>
        <taxon>Lactobacillaceae</taxon>
        <taxon>Lacticaseibacillus</taxon>
    </lineage>
</organism>
<sequence length="228" mass="24084">MKAAVISFPGSNCDLDLQWAVRAIAGAECDLIKPTQTDLTAYDVVMVPGGFSYGDYLRSGAIARFSPVMAALKQFAAAGGYVIGICNGFQILTEAGLLPGALQWNRDLNFICEPVALTVENAGTAFSNQYQVGEHLTLPIAHGEGNYYADPETLAALETNGQVVFRYANNPNGSMHDIAGVTNETGNVLGMMPHPERAVEALLGGTDGLGVFQSLINQTEGADVRGAR</sequence>
<comment type="function">
    <text evidence="1">Part of the phosphoribosylformylglycinamidine synthase complex involved in the purines biosynthetic pathway. Catalyzes the ATP-dependent conversion of formylglycinamide ribonucleotide (FGAR) and glutamine to yield formylglycinamidine ribonucleotide (FGAM) and glutamate. The FGAM synthase complex is composed of three subunits. PurQ produces an ammonia molecule by converting glutamine to glutamate. PurL transfers the ammonia molecule to FGAR to form FGAM in an ATP-dependent manner. PurS interacts with PurQ and PurL and is thought to assist in the transfer of the ammonia molecule from PurQ to PurL.</text>
</comment>
<comment type="catalytic activity">
    <reaction evidence="1">
        <text>N(2)-formyl-N(1)-(5-phospho-beta-D-ribosyl)glycinamide + L-glutamine + ATP + H2O = 2-formamido-N(1)-(5-O-phospho-beta-D-ribosyl)acetamidine + L-glutamate + ADP + phosphate + H(+)</text>
        <dbReference type="Rhea" id="RHEA:17129"/>
        <dbReference type="ChEBI" id="CHEBI:15377"/>
        <dbReference type="ChEBI" id="CHEBI:15378"/>
        <dbReference type="ChEBI" id="CHEBI:29985"/>
        <dbReference type="ChEBI" id="CHEBI:30616"/>
        <dbReference type="ChEBI" id="CHEBI:43474"/>
        <dbReference type="ChEBI" id="CHEBI:58359"/>
        <dbReference type="ChEBI" id="CHEBI:147286"/>
        <dbReference type="ChEBI" id="CHEBI:147287"/>
        <dbReference type="ChEBI" id="CHEBI:456216"/>
        <dbReference type="EC" id="6.3.5.3"/>
    </reaction>
</comment>
<comment type="catalytic activity">
    <reaction evidence="1">
        <text>L-glutamine + H2O = L-glutamate + NH4(+)</text>
        <dbReference type="Rhea" id="RHEA:15889"/>
        <dbReference type="ChEBI" id="CHEBI:15377"/>
        <dbReference type="ChEBI" id="CHEBI:28938"/>
        <dbReference type="ChEBI" id="CHEBI:29985"/>
        <dbReference type="ChEBI" id="CHEBI:58359"/>
        <dbReference type="EC" id="3.5.1.2"/>
    </reaction>
</comment>
<comment type="pathway">
    <text evidence="1">Purine metabolism; IMP biosynthesis via de novo pathway; 5-amino-1-(5-phospho-D-ribosyl)imidazole from N(2)-formyl-N(1)-(5-phospho-D-ribosyl)glycinamide: step 1/2.</text>
</comment>
<comment type="subunit">
    <text evidence="1">Part of the FGAM synthase complex composed of 1 PurL, 1 PurQ and 2 PurS subunits.</text>
</comment>
<comment type="subcellular location">
    <subcellularLocation>
        <location evidence="1">Cytoplasm</location>
    </subcellularLocation>
</comment>
<proteinExistence type="inferred from homology"/>